<keyword id="KW-0028">Amino-acid biosynthesis</keyword>
<keyword id="KW-0057">Aromatic amino acid biosynthesis</keyword>
<keyword id="KW-0456">Lyase</keyword>
<keyword id="KW-0460">Magnesium</keyword>
<keyword id="KW-0479">Metal-binding</keyword>
<keyword id="KW-1185">Reference proteome</keyword>
<keyword id="KW-0822">Tryptophan biosynthesis</keyword>
<name>TRPE_MYCBO</name>
<evidence type="ECO:0000250" key="1"/>
<evidence type="ECO:0000250" key="2">
    <source>
        <dbReference type="UniProtKB" id="P00897"/>
    </source>
</evidence>
<evidence type="ECO:0000305" key="3"/>
<sequence>MHADLAATTSREDFRLLAAEHRVVPVTRKVLADSETPLSAYRKLAANRPGTFLLESAENGRSWSRWSFIGAGAPTALTVREGQAVWLGAVPKDAPTGGDPLRALQVTLELLATADRQSEPGLPPLSGGMVGFFAYDMVRRLERLPERAVDDLCLPDMLLLLATDVAAVDHHEGTITLIANAVNWNGTDERVDWAYDDAVARLDVMTAALGQPLPSTVATFSRPEPRHRAQRTVEEYGAIVEYLVDQIAAGEAFQVVPSQRFEMDTDVDPIDVYRILRVTNPSPYMYLLQVPNSDGAVDFSIVGSSPEALVTVHEGWATTHPIAGTRWRGRTDDEDVLLEKELLADDKERAEHLMLVDLGRNDLGRVCTPGTVRVEDYSHIERYSHVMHLVSTVTGKLGEGRTALDAVTACFPAGTLSGAPKVRAMELIEEVEKTRRGLYGGVVGYLDFAGNADFAIAIRTALMRNGTAYVQAGGGVVADSNGSYEYNEARNKARAVLNAIAAAETLAAPGANRSGC</sequence>
<comment type="function">
    <text evidence="1">Part of a heterotetrameric complex that catalyzes the two-step biosynthesis of anthranilate, an intermediate in the biosynthesis of L-tryptophan. In the first step, the glutamine-binding beta subunit (TrpG) of anthranilate synthase (AS) provides the glutamine amidotransferase activity which generates ammonia as a substrate that, along with chorismate, is used in the second step, catalyzed by the large alpha subunit of AS (TrpE) to produce anthranilate. In the absence of TrpG, TrpE can synthesize anthranilate directly from chorismate and high concentrations of ammonia (By similarity).</text>
</comment>
<comment type="catalytic activity">
    <reaction>
        <text>chorismate + L-glutamine = anthranilate + pyruvate + L-glutamate + H(+)</text>
        <dbReference type="Rhea" id="RHEA:21732"/>
        <dbReference type="ChEBI" id="CHEBI:15361"/>
        <dbReference type="ChEBI" id="CHEBI:15378"/>
        <dbReference type="ChEBI" id="CHEBI:16567"/>
        <dbReference type="ChEBI" id="CHEBI:29748"/>
        <dbReference type="ChEBI" id="CHEBI:29985"/>
        <dbReference type="ChEBI" id="CHEBI:58359"/>
        <dbReference type="EC" id="4.1.3.27"/>
    </reaction>
</comment>
<comment type="cofactor">
    <cofactor evidence="2">
        <name>Mg(2+)</name>
        <dbReference type="ChEBI" id="CHEBI:18420"/>
    </cofactor>
    <text evidence="2">Binds 1 Mg(2+) ion per subunit.</text>
</comment>
<comment type="activity regulation">
    <text evidence="1">Feedback inhibited by tryptophan.</text>
</comment>
<comment type="pathway">
    <text>Amino-acid biosynthesis; L-tryptophan biosynthesis; L-tryptophan from chorismate: step 1/5.</text>
</comment>
<comment type="subunit">
    <text evidence="1">Heterotetramer consisting of two non-identical subunits: a beta subunit (TrpG) and a large alpha subunit (TrpE).</text>
</comment>
<comment type="similarity">
    <text evidence="3">Belongs to the anthranilate synthase component I family.</text>
</comment>
<protein>
    <recommendedName>
        <fullName>Anthranilate synthase component 1</fullName>
        <shortName>AS</shortName>
        <shortName>ASI</shortName>
        <ecNumber>4.1.3.27</ecNumber>
    </recommendedName>
</protein>
<accession>P67002</accession>
<accession>A0A1R3XYT9</accession>
<accession>O06127</accession>
<accession>X2BIC2</accession>
<reference key="1">
    <citation type="journal article" date="2003" name="Proc. Natl. Acad. Sci. U.S.A.">
        <title>The complete genome sequence of Mycobacterium bovis.</title>
        <authorList>
            <person name="Garnier T."/>
            <person name="Eiglmeier K."/>
            <person name="Camus J.-C."/>
            <person name="Medina N."/>
            <person name="Mansoor H."/>
            <person name="Pryor M."/>
            <person name="Duthoy S."/>
            <person name="Grondin S."/>
            <person name="Lacroix C."/>
            <person name="Monsempe C."/>
            <person name="Simon S."/>
            <person name="Harris B."/>
            <person name="Atkin R."/>
            <person name="Doggett J."/>
            <person name="Mayes R."/>
            <person name="Keating L."/>
            <person name="Wheeler P.R."/>
            <person name="Parkhill J."/>
            <person name="Barrell B.G."/>
            <person name="Cole S.T."/>
            <person name="Gordon S.V."/>
            <person name="Hewinson R.G."/>
        </authorList>
    </citation>
    <scope>NUCLEOTIDE SEQUENCE [LARGE SCALE GENOMIC DNA]</scope>
    <source>
        <strain>ATCC BAA-935 / AF2122/97</strain>
    </source>
</reference>
<reference key="2">
    <citation type="journal article" date="2017" name="Genome Announc.">
        <title>Updated reference genome sequence and annotation of Mycobacterium bovis AF2122/97.</title>
        <authorList>
            <person name="Malone K.M."/>
            <person name="Farrell D."/>
            <person name="Stuber T.P."/>
            <person name="Schubert O.T."/>
            <person name="Aebersold R."/>
            <person name="Robbe-Austerman S."/>
            <person name="Gordon S.V."/>
        </authorList>
    </citation>
    <scope>NUCLEOTIDE SEQUENCE [LARGE SCALE GENOMIC DNA]</scope>
    <scope>GENOME REANNOTATION</scope>
    <source>
        <strain>ATCC BAA-935 / AF2122/97</strain>
    </source>
</reference>
<proteinExistence type="inferred from homology"/>
<organism>
    <name type="scientific">Mycobacterium bovis (strain ATCC BAA-935 / AF2122/97)</name>
    <dbReference type="NCBI Taxonomy" id="233413"/>
    <lineage>
        <taxon>Bacteria</taxon>
        <taxon>Bacillati</taxon>
        <taxon>Actinomycetota</taxon>
        <taxon>Actinomycetes</taxon>
        <taxon>Mycobacteriales</taxon>
        <taxon>Mycobacteriaceae</taxon>
        <taxon>Mycobacterium</taxon>
        <taxon>Mycobacterium tuberculosis complex</taxon>
    </lineage>
</organism>
<dbReference type="EC" id="4.1.3.27"/>
<dbReference type="EMBL" id="LT708304">
    <property type="protein sequence ID" value="SIU00239.1"/>
    <property type="molecule type" value="Genomic_DNA"/>
</dbReference>
<dbReference type="RefSeq" id="NP_855288.1">
    <property type="nucleotide sequence ID" value="NC_002945.3"/>
</dbReference>
<dbReference type="RefSeq" id="WP_003407977.1">
    <property type="nucleotide sequence ID" value="NC_002945.4"/>
</dbReference>
<dbReference type="SMR" id="P67002"/>
<dbReference type="KEGG" id="mbo:BQ2027_MB1635"/>
<dbReference type="PATRIC" id="fig|233413.5.peg.1784"/>
<dbReference type="UniPathway" id="UPA00035">
    <property type="reaction ID" value="UER00040"/>
</dbReference>
<dbReference type="Proteomes" id="UP000001419">
    <property type="component" value="Chromosome"/>
</dbReference>
<dbReference type="GO" id="GO:0004049">
    <property type="term" value="F:anthranilate synthase activity"/>
    <property type="evidence" value="ECO:0007669"/>
    <property type="project" value="UniProtKB-EC"/>
</dbReference>
<dbReference type="GO" id="GO:0046872">
    <property type="term" value="F:metal ion binding"/>
    <property type="evidence" value="ECO:0007669"/>
    <property type="project" value="UniProtKB-KW"/>
</dbReference>
<dbReference type="GO" id="GO:0000162">
    <property type="term" value="P:L-tryptophan biosynthetic process"/>
    <property type="evidence" value="ECO:0007669"/>
    <property type="project" value="UniProtKB-UniPathway"/>
</dbReference>
<dbReference type="FunFam" id="3.60.120.10:FF:000008">
    <property type="entry name" value="Anthranilate synthase component 1"/>
    <property type="match status" value="1"/>
</dbReference>
<dbReference type="Gene3D" id="3.60.120.10">
    <property type="entry name" value="Anthranilate synthase"/>
    <property type="match status" value="1"/>
</dbReference>
<dbReference type="InterPro" id="IPR005801">
    <property type="entry name" value="ADC_synthase"/>
</dbReference>
<dbReference type="InterPro" id="IPR019999">
    <property type="entry name" value="Anth_synth_I-like"/>
</dbReference>
<dbReference type="InterPro" id="IPR006805">
    <property type="entry name" value="Anth_synth_I_N"/>
</dbReference>
<dbReference type="InterPro" id="IPR005256">
    <property type="entry name" value="Anth_synth_I_PabB"/>
</dbReference>
<dbReference type="InterPro" id="IPR015890">
    <property type="entry name" value="Chorismate_C"/>
</dbReference>
<dbReference type="NCBIfam" id="NF010086">
    <property type="entry name" value="PRK13571.1"/>
    <property type="match status" value="1"/>
</dbReference>
<dbReference type="NCBIfam" id="TIGR00564">
    <property type="entry name" value="trpE_most"/>
    <property type="match status" value="1"/>
</dbReference>
<dbReference type="PANTHER" id="PTHR11236">
    <property type="entry name" value="AMINOBENZOATE/ANTHRANILATE SYNTHASE"/>
    <property type="match status" value="1"/>
</dbReference>
<dbReference type="PANTHER" id="PTHR11236:SF46">
    <property type="entry name" value="ANTHRANILATE SYNTHASE COMPONENT 1"/>
    <property type="match status" value="1"/>
</dbReference>
<dbReference type="Pfam" id="PF04715">
    <property type="entry name" value="Anth_synt_I_N"/>
    <property type="match status" value="1"/>
</dbReference>
<dbReference type="Pfam" id="PF00425">
    <property type="entry name" value="Chorismate_bind"/>
    <property type="match status" value="1"/>
</dbReference>
<dbReference type="PRINTS" id="PR00095">
    <property type="entry name" value="ANTSNTHASEI"/>
</dbReference>
<dbReference type="SUPFAM" id="SSF56322">
    <property type="entry name" value="ADC synthase"/>
    <property type="match status" value="1"/>
</dbReference>
<gene>
    <name type="primary">trpE</name>
    <name type="ordered locus">BQ2027_MB1635</name>
</gene>
<feature type="chain" id="PRO_0000154100" description="Anthranilate synthase component 1">
    <location>
        <begin position="1"/>
        <end position="516"/>
    </location>
</feature>
<feature type="binding site" evidence="2">
    <location>
        <position position="56"/>
    </location>
    <ligand>
        <name>L-tryptophan</name>
        <dbReference type="ChEBI" id="CHEBI:57912"/>
    </ligand>
</feature>
<feature type="binding site" evidence="2">
    <location>
        <begin position="283"/>
        <end position="285"/>
    </location>
    <ligand>
        <name>L-tryptophan</name>
        <dbReference type="ChEBI" id="CHEBI:57912"/>
    </ligand>
</feature>
<feature type="binding site" evidence="2">
    <location>
        <begin position="324"/>
        <end position="325"/>
    </location>
    <ligand>
        <name>chorismate</name>
        <dbReference type="ChEBI" id="CHEBI:29748"/>
    </ligand>
</feature>
<feature type="binding site" evidence="2">
    <location>
        <position position="351"/>
    </location>
    <ligand>
        <name>Mg(2+)</name>
        <dbReference type="ChEBI" id="CHEBI:18420"/>
    </ligand>
</feature>
<feature type="binding site" evidence="2">
    <location>
        <position position="439"/>
    </location>
    <ligand>
        <name>chorismate</name>
        <dbReference type="ChEBI" id="CHEBI:29748"/>
    </ligand>
</feature>
<feature type="binding site" evidence="2">
    <location>
        <position position="459"/>
    </location>
    <ligand>
        <name>chorismate</name>
        <dbReference type="ChEBI" id="CHEBI:29748"/>
    </ligand>
</feature>
<feature type="binding site" evidence="2">
    <location>
        <begin position="473"/>
        <end position="475"/>
    </location>
    <ligand>
        <name>chorismate</name>
        <dbReference type="ChEBI" id="CHEBI:29748"/>
    </ligand>
</feature>
<feature type="binding site" evidence="2">
    <location>
        <position position="475"/>
    </location>
    <ligand>
        <name>chorismate</name>
        <dbReference type="ChEBI" id="CHEBI:29748"/>
    </ligand>
</feature>
<feature type="binding site" evidence="2">
    <location>
        <position position="488"/>
    </location>
    <ligand>
        <name>Mg(2+)</name>
        <dbReference type="ChEBI" id="CHEBI:18420"/>
    </ligand>
</feature>